<feature type="chain" id="PRO_0000178079" description="Apolipoprotein N-acyltransferase">
    <location>
        <begin position="1"/>
        <end position="520"/>
    </location>
</feature>
<feature type="transmembrane region" description="Helical" evidence="1">
    <location>
        <begin position="12"/>
        <end position="32"/>
    </location>
</feature>
<feature type="transmembrane region" description="Helical" evidence="1">
    <location>
        <begin position="33"/>
        <end position="53"/>
    </location>
</feature>
<feature type="transmembrane region" description="Helical" evidence="1">
    <location>
        <begin position="58"/>
        <end position="78"/>
    </location>
</feature>
<feature type="transmembrane region" description="Helical" evidence="1">
    <location>
        <begin position="93"/>
        <end position="113"/>
    </location>
</feature>
<feature type="transmembrane region" description="Helical" evidence="1">
    <location>
        <begin position="122"/>
        <end position="142"/>
    </location>
</feature>
<feature type="transmembrane region" description="Helical" evidence="1">
    <location>
        <begin position="168"/>
        <end position="188"/>
    </location>
</feature>
<feature type="transmembrane region" description="Helical" evidence="1">
    <location>
        <begin position="193"/>
        <end position="213"/>
    </location>
</feature>
<feature type="transmembrane region" description="Helical" evidence="1">
    <location>
        <begin position="484"/>
        <end position="504"/>
    </location>
</feature>
<feature type="domain" description="CN hydrolase" evidence="1">
    <location>
        <begin position="232"/>
        <end position="479"/>
    </location>
</feature>
<feature type="active site" description="Proton acceptor" evidence="1">
    <location>
        <position position="272"/>
    </location>
</feature>
<feature type="active site" evidence="1">
    <location>
        <position position="338"/>
    </location>
</feature>
<feature type="active site" description="Nucleophile" evidence="1">
    <location>
        <position position="390"/>
    </location>
</feature>
<name>LNT_PASMU</name>
<sequence length="520" mass="58733">MLHYLKKMKKKIFTYFIAIFSGIIGVLAFSPFDYWGCAYLSLLGLIFVAKTAEKKTALWSAFLWGLAFFTFGINWVHVSIHQFGGASVVVSYVLVLVLAAYLALYPMLFAYLIQRFQISSLAMFPVIWTFTEFLRGWLFTGFPWLQFGYSQIDSPFAHLAPMFGVTGVTFFVMWVSAVIFNLLSVLLIKPRKWNVVIANLLLLTLVGGLSAYSSKAEYVRKIEDRDLLVTLAQGNIEQNLKWEPEYLYQTLDIYHKLISQHLGKTDVIILPESALPVLENHIQPFFQGLQAHAQQAGTEIVMGTIYQDKTANKLLNSIITLGNTDFPYSLETTNRYSKHHLVPFGEYVPLETLLRPLGSVFNLPMSAFQSGDEIQSPLVVKNRQLSAAICYEIILGEQLRKNVKQDTDFILTVSNDAWFGDSIGPWQHLQMARMRALEFGKPVIRATNTGISVFIDEQGKIVAQAPQFIETTLTHKVAATEGQTPYAVFGNTAIYGLSLLLLLMRGFGALIRRRLFMPRL</sequence>
<accession>Q9CM14</accession>
<comment type="function">
    <text evidence="1">Catalyzes the phospholipid dependent N-acylation of the N-terminal cysteine of apolipoprotein, the last step in lipoprotein maturation.</text>
</comment>
<comment type="catalytic activity">
    <reaction evidence="1">
        <text>N-terminal S-1,2-diacyl-sn-glyceryl-L-cysteinyl-[lipoprotein] + a glycerophospholipid = N-acyl-S-1,2-diacyl-sn-glyceryl-L-cysteinyl-[lipoprotein] + a 2-acyl-sn-glycero-3-phospholipid + H(+)</text>
        <dbReference type="Rhea" id="RHEA:48228"/>
        <dbReference type="Rhea" id="RHEA-COMP:14681"/>
        <dbReference type="Rhea" id="RHEA-COMP:14684"/>
        <dbReference type="ChEBI" id="CHEBI:15378"/>
        <dbReference type="ChEBI" id="CHEBI:136912"/>
        <dbReference type="ChEBI" id="CHEBI:140656"/>
        <dbReference type="ChEBI" id="CHEBI:140657"/>
        <dbReference type="ChEBI" id="CHEBI:140660"/>
        <dbReference type="EC" id="2.3.1.269"/>
    </reaction>
</comment>
<comment type="pathway">
    <text evidence="1">Protein modification; lipoprotein biosynthesis (N-acyl transfer).</text>
</comment>
<comment type="subcellular location">
    <subcellularLocation>
        <location evidence="1">Cell inner membrane</location>
        <topology evidence="1">Multi-pass membrane protein</topology>
    </subcellularLocation>
</comment>
<comment type="similarity">
    <text evidence="1">Belongs to the CN hydrolase family. Apolipoprotein N-acyltransferase subfamily.</text>
</comment>
<keyword id="KW-0012">Acyltransferase</keyword>
<keyword id="KW-0997">Cell inner membrane</keyword>
<keyword id="KW-1003">Cell membrane</keyword>
<keyword id="KW-0472">Membrane</keyword>
<keyword id="KW-1185">Reference proteome</keyword>
<keyword id="KW-0808">Transferase</keyword>
<keyword id="KW-0812">Transmembrane</keyword>
<keyword id="KW-1133">Transmembrane helix</keyword>
<protein>
    <recommendedName>
        <fullName evidence="1">Apolipoprotein N-acyltransferase</fullName>
        <shortName evidence="1">ALP N-acyltransferase</shortName>
        <ecNumber evidence="1">2.3.1.269</ecNumber>
    </recommendedName>
</protein>
<gene>
    <name evidence="1" type="primary">lnt</name>
    <name type="ordered locus">PM1032</name>
</gene>
<reference key="1">
    <citation type="journal article" date="2001" name="Proc. Natl. Acad. Sci. U.S.A.">
        <title>Complete genomic sequence of Pasteurella multocida Pm70.</title>
        <authorList>
            <person name="May B.J."/>
            <person name="Zhang Q."/>
            <person name="Li L.L."/>
            <person name="Paustian M.L."/>
            <person name="Whittam T.S."/>
            <person name="Kapur V."/>
        </authorList>
    </citation>
    <scope>NUCLEOTIDE SEQUENCE [LARGE SCALE GENOMIC DNA]</scope>
    <source>
        <strain>Pm70</strain>
    </source>
</reference>
<proteinExistence type="inferred from homology"/>
<evidence type="ECO:0000255" key="1">
    <source>
        <dbReference type="HAMAP-Rule" id="MF_01148"/>
    </source>
</evidence>
<dbReference type="EC" id="2.3.1.269" evidence="1"/>
<dbReference type="EMBL" id="AE004439">
    <property type="protein sequence ID" value="AAK03116.1"/>
    <property type="molecule type" value="Genomic_DNA"/>
</dbReference>
<dbReference type="SMR" id="Q9CM14"/>
<dbReference type="STRING" id="272843.PM1032"/>
<dbReference type="EnsemblBacteria" id="AAK03116">
    <property type="protein sequence ID" value="AAK03116"/>
    <property type="gene ID" value="PM1032"/>
</dbReference>
<dbReference type="KEGG" id="pmu:PM1032"/>
<dbReference type="HOGENOM" id="CLU_019563_3_0_6"/>
<dbReference type="UniPathway" id="UPA00666"/>
<dbReference type="Proteomes" id="UP000000809">
    <property type="component" value="Chromosome"/>
</dbReference>
<dbReference type="GO" id="GO:0005886">
    <property type="term" value="C:plasma membrane"/>
    <property type="evidence" value="ECO:0007669"/>
    <property type="project" value="UniProtKB-SubCell"/>
</dbReference>
<dbReference type="GO" id="GO:0016410">
    <property type="term" value="F:N-acyltransferase activity"/>
    <property type="evidence" value="ECO:0007669"/>
    <property type="project" value="UniProtKB-UniRule"/>
</dbReference>
<dbReference type="GO" id="GO:0042158">
    <property type="term" value="P:lipoprotein biosynthetic process"/>
    <property type="evidence" value="ECO:0007669"/>
    <property type="project" value="UniProtKB-UniRule"/>
</dbReference>
<dbReference type="CDD" id="cd07571">
    <property type="entry name" value="ALP_N-acyl_transferase"/>
    <property type="match status" value="1"/>
</dbReference>
<dbReference type="Gene3D" id="3.60.110.10">
    <property type="entry name" value="Carbon-nitrogen hydrolase"/>
    <property type="match status" value="1"/>
</dbReference>
<dbReference type="HAMAP" id="MF_01148">
    <property type="entry name" value="Lnt"/>
    <property type="match status" value="1"/>
</dbReference>
<dbReference type="InterPro" id="IPR004563">
    <property type="entry name" value="Apolipo_AcylTrfase"/>
</dbReference>
<dbReference type="InterPro" id="IPR003010">
    <property type="entry name" value="C-N_Hydrolase"/>
</dbReference>
<dbReference type="InterPro" id="IPR036526">
    <property type="entry name" value="C-N_Hydrolase_sf"/>
</dbReference>
<dbReference type="InterPro" id="IPR045378">
    <property type="entry name" value="LNT_N"/>
</dbReference>
<dbReference type="NCBIfam" id="TIGR00546">
    <property type="entry name" value="lnt"/>
    <property type="match status" value="1"/>
</dbReference>
<dbReference type="PANTHER" id="PTHR38686">
    <property type="entry name" value="APOLIPOPROTEIN N-ACYLTRANSFERASE"/>
    <property type="match status" value="1"/>
</dbReference>
<dbReference type="PANTHER" id="PTHR38686:SF1">
    <property type="entry name" value="APOLIPOPROTEIN N-ACYLTRANSFERASE"/>
    <property type="match status" value="1"/>
</dbReference>
<dbReference type="Pfam" id="PF00795">
    <property type="entry name" value="CN_hydrolase"/>
    <property type="match status" value="1"/>
</dbReference>
<dbReference type="Pfam" id="PF20154">
    <property type="entry name" value="LNT_N"/>
    <property type="match status" value="1"/>
</dbReference>
<dbReference type="SUPFAM" id="SSF56317">
    <property type="entry name" value="Carbon-nitrogen hydrolase"/>
    <property type="match status" value="1"/>
</dbReference>
<dbReference type="PROSITE" id="PS50263">
    <property type="entry name" value="CN_HYDROLASE"/>
    <property type="match status" value="1"/>
</dbReference>
<organism>
    <name type="scientific">Pasteurella multocida (strain Pm70)</name>
    <dbReference type="NCBI Taxonomy" id="272843"/>
    <lineage>
        <taxon>Bacteria</taxon>
        <taxon>Pseudomonadati</taxon>
        <taxon>Pseudomonadota</taxon>
        <taxon>Gammaproteobacteria</taxon>
        <taxon>Pasteurellales</taxon>
        <taxon>Pasteurellaceae</taxon>
        <taxon>Pasteurella</taxon>
    </lineage>
</organism>